<protein>
    <recommendedName>
        <fullName evidence="5">Flavin mononucleotide hydrolase 1, chloroplatic</fullName>
        <shortName evidence="5">AtcpFHy1</shortName>
        <ecNumber evidence="2">3.1.3.102</ecNumber>
    </recommendedName>
    <alternativeName>
        <fullName evidence="9">5-amino-6-(5-phospho-D-ribitylamino)uracil phosphatase</fullName>
        <shortName evidence="6">AtcpFHy1/PyrP1</shortName>
        <ecNumber evidence="3 4">3.1.3.104</ecNumber>
    </alternativeName>
    <alternativeName>
        <fullName evidence="9">5-amino-6-ribitylamino-2,4(1H,3H)-pyrimidinedione 5'-phosphate phosphatase</fullName>
        <shortName evidence="9">ARPP phosphatase</shortName>
    </alternativeName>
</protein>
<comment type="function">
    <text evidence="2 3 4">FMN hydrolase that catalyzes the dephosphorylation of flavin mononucleotide (FMN) to riboflavin (PubMed:22002057, PubMed:24123841, PubMed:27490826). Can also dephosphorylate 5-amino-6-(5-phospho-D-ribitylamino)uracil, also known as ARPP (PubMed:24123841, PubMed:27490826). Not required for riboflavin biosynthesis in planta, but may help maintaining flavin homeostasis within chloroplasts (PubMed:27490826).</text>
</comment>
<comment type="catalytic activity">
    <reaction evidence="2">
        <text>FMN + H2O = riboflavin + phosphate</text>
        <dbReference type="Rhea" id="RHEA:35587"/>
        <dbReference type="ChEBI" id="CHEBI:15377"/>
        <dbReference type="ChEBI" id="CHEBI:43474"/>
        <dbReference type="ChEBI" id="CHEBI:57986"/>
        <dbReference type="ChEBI" id="CHEBI:58210"/>
        <dbReference type="EC" id="3.1.3.102"/>
    </reaction>
</comment>
<comment type="catalytic activity">
    <reaction evidence="3 4">
        <text>5-amino-6-(5-phospho-D-ribitylamino)uracil + H2O = 5-amino-6-(D-ribitylamino)uracil + phosphate</text>
        <dbReference type="Rhea" id="RHEA:25197"/>
        <dbReference type="ChEBI" id="CHEBI:15377"/>
        <dbReference type="ChEBI" id="CHEBI:15934"/>
        <dbReference type="ChEBI" id="CHEBI:43474"/>
        <dbReference type="ChEBI" id="CHEBI:58421"/>
        <dbReference type="EC" id="3.1.3.104"/>
    </reaction>
</comment>
<comment type="cofactor">
    <cofactor evidence="8">
        <name>Mg(2+)</name>
        <dbReference type="ChEBI" id="CHEBI:18420"/>
    </cofactor>
</comment>
<comment type="biophysicochemical properties">
    <kinetics>
        <KM evidence="2">14.2 uM for FMN</KM>
        <KM evidence="4">128 uM for 5-amino-6-(5-phospho-D-ribitylamino)uracil</KM>
        <Vmax evidence="2">1.42 umol/min/mg enzyme with FMN as substrate</Vmax>
        <Vmax evidence="4">6.73 umol/min/mg enzyme with 5-amino-6-(5-phospho-D-ribitylamino)uracil as substrate</Vmax>
        <text evidence="2 4">kcat is 0.59 sec(-1) for FMN (PubMed:22002057). kcat is 2.80 sec(-1) for 5-amino-6-(5-phospho-D-ribitylamino)uracil (PubMed:27490826).</text>
    </kinetics>
    <phDependence>
        <text evidence="2">Optimum pH is 6.5-7.0 for both catalytic activities.</text>
    </phDependence>
    <temperatureDependence>
        <text evidence="2">Optimum temperature is 40 degrees Celsius for both catalytic activities.</text>
    </temperatureDependence>
</comment>
<comment type="subunit">
    <text evidence="4">Homodimer.</text>
</comment>
<comment type="subcellular location">
    <subcellularLocation>
        <location evidence="2">Plastid</location>
        <location evidence="2">Chloroplast stroma</location>
    </subcellularLocation>
</comment>
<comment type="disruption phenotype">
    <text evidence="4">No visible phenotype and no effect on flavin metabolite profile and abundances.</text>
</comment>
<comment type="similarity">
    <text evidence="7">Belongs to the HAD-like hydrolase superfamily. DOG/GPP family.</text>
</comment>
<comment type="sequence caution" evidence="7">
    <conflict type="erroneous gene model prediction">
        <sequence resource="EMBL-CDS" id="AAF68115"/>
    </conflict>
</comment>
<name>FHY1C_ARATH</name>
<keyword id="KW-0150">Chloroplast</keyword>
<keyword id="KW-0378">Hydrolase</keyword>
<keyword id="KW-0934">Plastid</keyword>
<keyword id="KW-1185">Reference proteome</keyword>
<keyword id="KW-0686">Riboflavin biosynthesis</keyword>
<keyword id="KW-0809">Transit peptide</keyword>
<sequence length="245" mass="27695">MAAAAMHTSAEFINLKPNMWKKNPVRASGSCCLGSSSGDEISRKRKLPILLFDVMDTIVRDPFYQDVPAFFGMPMKQLLECKHPMVWIEFEKGLIDEEELARNFFIDGRDFDLEGLKECMRSGYSYLDGMQELLQTLAADDFEIHAFTNYPIWYNIIEDKLKLSAYLSWTFCSCIAGKRKPDPEFYLEVVGHLGVEPCDCIFIDDRPTNVKCAIEIGMGGLCFENADSLAKDLSDLGINVSVPKL</sequence>
<reference key="1">
    <citation type="journal article" date="2000" name="Nature">
        <title>Sequence and analysis of chromosome 1 of the plant Arabidopsis thaliana.</title>
        <authorList>
            <person name="Theologis A."/>
            <person name="Ecker J.R."/>
            <person name="Palm C.J."/>
            <person name="Federspiel N.A."/>
            <person name="Kaul S."/>
            <person name="White O."/>
            <person name="Alonso J."/>
            <person name="Altafi H."/>
            <person name="Araujo R."/>
            <person name="Bowman C.L."/>
            <person name="Brooks S.Y."/>
            <person name="Buehler E."/>
            <person name="Chan A."/>
            <person name="Chao Q."/>
            <person name="Chen H."/>
            <person name="Cheuk R.F."/>
            <person name="Chin C.W."/>
            <person name="Chung M.K."/>
            <person name="Conn L."/>
            <person name="Conway A.B."/>
            <person name="Conway A.R."/>
            <person name="Creasy T.H."/>
            <person name="Dewar K."/>
            <person name="Dunn P."/>
            <person name="Etgu P."/>
            <person name="Feldblyum T.V."/>
            <person name="Feng J.-D."/>
            <person name="Fong B."/>
            <person name="Fujii C.Y."/>
            <person name="Gill J.E."/>
            <person name="Goldsmith A.D."/>
            <person name="Haas B."/>
            <person name="Hansen N.F."/>
            <person name="Hughes B."/>
            <person name="Huizar L."/>
            <person name="Hunter J.L."/>
            <person name="Jenkins J."/>
            <person name="Johnson-Hopson C."/>
            <person name="Khan S."/>
            <person name="Khaykin E."/>
            <person name="Kim C.J."/>
            <person name="Koo H.L."/>
            <person name="Kremenetskaia I."/>
            <person name="Kurtz D.B."/>
            <person name="Kwan A."/>
            <person name="Lam B."/>
            <person name="Langin-Hooper S."/>
            <person name="Lee A."/>
            <person name="Lee J.M."/>
            <person name="Lenz C.A."/>
            <person name="Li J.H."/>
            <person name="Li Y.-P."/>
            <person name="Lin X."/>
            <person name="Liu S.X."/>
            <person name="Liu Z.A."/>
            <person name="Luros J.S."/>
            <person name="Maiti R."/>
            <person name="Marziali A."/>
            <person name="Militscher J."/>
            <person name="Miranda M."/>
            <person name="Nguyen M."/>
            <person name="Nierman W.C."/>
            <person name="Osborne B.I."/>
            <person name="Pai G."/>
            <person name="Peterson J."/>
            <person name="Pham P.K."/>
            <person name="Rizzo M."/>
            <person name="Rooney T."/>
            <person name="Rowley D."/>
            <person name="Sakano H."/>
            <person name="Salzberg S.L."/>
            <person name="Schwartz J.R."/>
            <person name="Shinn P."/>
            <person name="Southwick A.M."/>
            <person name="Sun H."/>
            <person name="Tallon L.J."/>
            <person name="Tambunga G."/>
            <person name="Toriumi M.J."/>
            <person name="Town C.D."/>
            <person name="Utterback T."/>
            <person name="Van Aken S."/>
            <person name="Vaysberg M."/>
            <person name="Vysotskaia V.S."/>
            <person name="Walker M."/>
            <person name="Wu D."/>
            <person name="Yu G."/>
            <person name="Fraser C.M."/>
            <person name="Venter J.C."/>
            <person name="Davis R.W."/>
        </authorList>
    </citation>
    <scope>NUCLEOTIDE SEQUENCE [LARGE SCALE GENOMIC DNA]</scope>
    <source>
        <strain>cv. Columbia</strain>
    </source>
</reference>
<reference key="2">
    <citation type="journal article" date="2017" name="Plant J.">
        <title>Araport11: a complete reannotation of the Arabidopsis thaliana reference genome.</title>
        <authorList>
            <person name="Cheng C.Y."/>
            <person name="Krishnakumar V."/>
            <person name="Chan A.P."/>
            <person name="Thibaud-Nissen F."/>
            <person name="Schobel S."/>
            <person name="Town C.D."/>
        </authorList>
    </citation>
    <scope>GENOME REANNOTATION</scope>
    <source>
        <strain>cv. Columbia</strain>
    </source>
</reference>
<reference key="3">
    <citation type="journal article" date="2003" name="Science">
        <title>Empirical analysis of transcriptional activity in the Arabidopsis genome.</title>
        <authorList>
            <person name="Yamada K."/>
            <person name="Lim J."/>
            <person name="Dale J.M."/>
            <person name="Chen H."/>
            <person name="Shinn P."/>
            <person name="Palm C.J."/>
            <person name="Southwick A.M."/>
            <person name="Wu H.C."/>
            <person name="Kim C.J."/>
            <person name="Nguyen M."/>
            <person name="Pham P.K."/>
            <person name="Cheuk R.F."/>
            <person name="Karlin-Newmann G."/>
            <person name="Liu S.X."/>
            <person name="Lam B."/>
            <person name="Sakano H."/>
            <person name="Wu T."/>
            <person name="Yu G."/>
            <person name="Miranda M."/>
            <person name="Quach H.L."/>
            <person name="Tripp M."/>
            <person name="Chang C.H."/>
            <person name="Lee J.M."/>
            <person name="Toriumi M.J."/>
            <person name="Chan M.M."/>
            <person name="Tang C.C."/>
            <person name="Onodera C.S."/>
            <person name="Deng J.M."/>
            <person name="Akiyama K."/>
            <person name="Ansari Y."/>
            <person name="Arakawa T."/>
            <person name="Banh J."/>
            <person name="Banno F."/>
            <person name="Bowser L."/>
            <person name="Brooks S.Y."/>
            <person name="Carninci P."/>
            <person name="Chao Q."/>
            <person name="Choy N."/>
            <person name="Enju A."/>
            <person name="Goldsmith A.D."/>
            <person name="Gurjal M."/>
            <person name="Hansen N.F."/>
            <person name="Hayashizaki Y."/>
            <person name="Johnson-Hopson C."/>
            <person name="Hsuan V.W."/>
            <person name="Iida K."/>
            <person name="Karnes M."/>
            <person name="Khan S."/>
            <person name="Koesema E."/>
            <person name="Ishida J."/>
            <person name="Jiang P.X."/>
            <person name="Jones T."/>
            <person name="Kawai J."/>
            <person name="Kamiya A."/>
            <person name="Meyers C."/>
            <person name="Nakajima M."/>
            <person name="Narusaka M."/>
            <person name="Seki M."/>
            <person name="Sakurai T."/>
            <person name="Satou M."/>
            <person name="Tamse R."/>
            <person name="Vaysberg M."/>
            <person name="Wallender E.K."/>
            <person name="Wong C."/>
            <person name="Yamamura Y."/>
            <person name="Yuan S."/>
            <person name="Shinozaki K."/>
            <person name="Davis R.W."/>
            <person name="Theologis A."/>
            <person name="Ecker J.R."/>
        </authorList>
    </citation>
    <scope>NUCLEOTIDE SEQUENCE [LARGE SCALE MRNA]</scope>
    <source>
        <strain>cv. Columbia</strain>
    </source>
</reference>
<reference key="4">
    <citation type="submission" date="2006-07" db="EMBL/GenBank/DDBJ databases">
        <title>Large-scale analysis of RIKEN Arabidopsis full-length (RAFL) cDNAs.</title>
        <authorList>
            <person name="Totoki Y."/>
            <person name="Seki M."/>
            <person name="Ishida J."/>
            <person name="Nakajima M."/>
            <person name="Enju A."/>
            <person name="Kamiya A."/>
            <person name="Narusaka M."/>
            <person name="Shin-i T."/>
            <person name="Nakagawa M."/>
            <person name="Sakamoto N."/>
            <person name="Oishi K."/>
            <person name="Kohara Y."/>
            <person name="Kobayashi M."/>
            <person name="Toyoda A."/>
            <person name="Sakaki Y."/>
            <person name="Sakurai T."/>
            <person name="Iida K."/>
            <person name="Akiyama K."/>
            <person name="Satou M."/>
            <person name="Toyoda T."/>
            <person name="Konagaya A."/>
            <person name="Carninci P."/>
            <person name="Kawai J."/>
            <person name="Hayashizaki Y."/>
            <person name="Shinozaki K."/>
        </authorList>
    </citation>
    <scope>NUCLEOTIDE SEQUENCE [LARGE SCALE MRNA]</scope>
    <source>
        <strain>cv. Columbia</strain>
    </source>
</reference>
<reference key="5">
    <citation type="submission" date="2002-03" db="EMBL/GenBank/DDBJ databases">
        <title>Full-length cDNA from Arabidopsis thaliana.</title>
        <authorList>
            <person name="Brover V.V."/>
            <person name="Troukhan M.E."/>
            <person name="Alexandrov N.A."/>
            <person name="Lu Y.-P."/>
            <person name="Flavell R.B."/>
            <person name="Feldmann K.A."/>
        </authorList>
    </citation>
    <scope>NUCLEOTIDE SEQUENCE [LARGE SCALE MRNA]</scope>
</reference>
<reference key="6">
    <citation type="journal article" date="2011" name="J. Biol. Chem.">
        <title>An FMN hydrolase of the haloacid dehalogenase superfamily is active in plant chloroplasts.</title>
        <authorList>
            <person name="Rawat R."/>
            <person name="Sandoval F.J."/>
            <person name="Wei Z."/>
            <person name="Winkler R."/>
            <person name="Roje S."/>
        </authorList>
    </citation>
    <scope>FUNCTION</scope>
    <scope>CATALYTIC ACTIVITY</scope>
    <scope>BIOPHYSICOCHEMICAL PROPERTIES</scope>
    <scope>SUBCELLULAR LOCATION</scope>
</reference>
<reference key="7">
    <citation type="journal article" date="2013" name="ChemBioChem">
        <title>Enzymes from the haloacid dehalogenase (HAD) superfamily catalyse the elusive dephosphorylation step of riboflavin biosynthesis.</title>
        <authorList>
            <person name="Haase I."/>
            <person name="Sarge S."/>
            <person name="Illarionov B."/>
            <person name="Laudert D."/>
            <person name="Hohmann H.P."/>
            <person name="Bacher A."/>
            <person name="Fischer M."/>
        </authorList>
    </citation>
    <scope>FUNCTION</scope>
    <scope>CATALYTIC ACTIVITY</scope>
</reference>
<reference key="8">
    <citation type="journal article" date="2016" name="Plant J.">
        <title>Identification and characterization of the missing phosphatase on the riboflavin biosynthesis pathway in Arabidopsis thaliana.</title>
        <authorList>
            <person name="Sa N."/>
            <person name="Rawat R."/>
            <person name="Thornburg C."/>
            <person name="Walker K.D."/>
            <person name="Roje S."/>
        </authorList>
    </citation>
    <scope>FUNCTION</scope>
    <scope>CATALYTIC ACTIVITY</scope>
    <scope>SUBUNIT</scope>
    <scope>BIOPHYSICOCHEMICAL PROPERTIES</scope>
    <scope>SUBSTRATE SPECIFICITY</scope>
    <scope>DISRUPTION PHENOTYPE</scope>
</reference>
<gene>
    <name evidence="5" type="primary">FHY1</name>
    <name evidence="6" type="synonym">PYRP1</name>
    <name evidence="10" type="ordered locus">At1g79790</name>
    <name evidence="11" type="ORF">F20B17.21</name>
</gene>
<accession>Q84VZ1</accession>
<accession>Q8LCB6</accession>
<accession>Q9MA00</accession>
<organism evidence="12">
    <name type="scientific">Arabidopsis thaliana</name>
    <name type="common">Mouse-ear cress</name>
    <dbReference type="NCBI Taxonomy" id="3702"/>
    <lineage>
        <taxon>Eukaryota</taxon>
        <taxon>Viridiplantae</taxon>
        <taxon>Streptophyta</taxon>
        <taxon>Embryophyta</taxon>
        <taxon>Tracheophyta</taxon>
        <taxon>Spermatophyta</taxon>
        <taxon>Magnoliopsida</taxon>
        <taxon>eudicotyledons</taxon>
        <taxon>Gunneridae</taxon>
        <taxon>Pentapetalae</taxon>
        <taxon>rosids</taxon>
        <taxon>malvids</taxon>
        <taxon>Brassicales</taxon>
        <taxon>Brassicaceae</taxon>
        <taxon>Camelineae</taxon>
        <taxon>Arabidopsis</taxon>
    </lineage>
</organism>
<evidence type="ECO:0000255" key="1"/>
<evidence type="ECO:0000269" key="2">
    <source>
    </source>
</evidence>
<evidence type="ECO:0000269" key="3">
    <source>
    </source>
</evidence>
<evidence type="ECO:0000269" key="4">
    <source>
    </source>
</evidence>
<evidence type="ECO:0000303" key="5">
    <source>
    </source>
</evidence>
<evidence type="ECO:0000303" key="6">
    <source>
    </source>
</evidence>
<evidence type="ECO:0000305" key="7"/>
<evidence type="ECO:0000305" key="8">
    <source>
    </source>
</evidence>
<evidence type="ECO:0000305" key="9">
    <source>
    </source>
</evidence>
<evidence type="ECO:0000312" key="10">
    <source>
        <dbReference type="Araport" id="AT1G79790"/>
    </source>
</evidence>
<evidence type="ECO:0000312" key="11">
    <source>
        <dbReference type="EMBL" id="AAF68115.1"/>
    </source>
</evidence>
<evidence type="ECO:0000312" key="12">
    <source>
        <dbReference type="EMBL" id="AAO42848.1"/>
    </source>
</evidence>
<dbReference type="EC" id="3.1.3.102" evidence="2"/>
<dbReference type="EC" id="3.1.3.104" evidence="3 4"/>
<dbReference type="EMBL" id="AC010793">
    <property type="protein sequence ID" value="AAF68115.1"/>
    <property type="status" value="ALT_SEQ"/>
    <property type="molecule type" value="Genomic_DNA"/>
</dbReference>
<dbReference type="EMBL" id="CP002684">
    <property type="protein sequence ID" value="AEE36298.1"/>
    <property type="molecule type" value="Genomic_DNA"/>
</dbReference>
<dbReference type="EMBL" id="BT004602">
    <property type="protein sequence ID" value="AAO42848.1"/>
    <property type="molecule type" value="mRNA"/>
</dbReference>
<dbReference type="EMBL" id="AK227909">
    <property type="protein sequence ID" value="BAE99879.1"/>
    <property type="molecule type" value="mRNA"/>
</dbReference>
<dbReference type="EMBL" id="AY086690">
    <property type="protein sequence ID" value="AAM63745.1"/>
    <property type="molecule type" value="mRNA"/>
</dbReference>
<dbReference type="RefSeq" id="NP_565221.1">
    <property type="nucleotide sequence ID" value="NM_106628.3"/>
</dbReference>
<dbReference type="SMR" id="Q84VZ1"/>
<dbReference type="FunCoup" id="Q84VZ1">
    <property type="interactions" value="745"/>
</dbReference>
<dbReference type="STRING" id="3702.Q84VZ1"/>
<dbReference type="PaxDb" id="3702-AT1G79790.1"/>
<dbReference type="ProteomicsDB" id="230717"/>
<dbReference type="EnsemblPlants" id="AT1G79790.1">
    <property type="protein sequence ID" value="AT1G79790.1"/>
    <property type="gene ID" value="AT1G79790"/>
</dbReference>
<dbReference type="GeneID" id="844318"/>
<dbReference type="Gramene" id="AT1G79790.1">
    <property type="protein sequence ID" value="AT1G79790.1"/>
    <property type="gene ID" value="AT1G79790"/>
</dbReference>
<dbReference type="KEGG" id="ath:AT1G79790"/>
<dbReference type="Araport" id="AT1G79790"/>
<dbReference type="TAIR" id="AT1G79790">
    <property type="gene designation" value="FHY1"/>
</dbReference>
<dbReference type="eggNOG" id="KOG3085">
    <property type="taxonomic scope" value="Eukaryota"/>
</dbReference>
<dbReference type="HOGENOM" id="CLU_080554_2_0_1"/>
<dbReference type="InParanoid" id="Q84VZ1"/>
<dbReference type="OMA" id="FIDDRMT"/>
<dbReference type="PhylomeDB" id="Q84VZ1"/>
<dbReference type="BRENDA" id="3.1.3.104">
    <property type="organism ID" value="399"/>
</dbReference>
<dbReference type="PRO" id="PR:Q84VZ1"/>
<dbReference type="Proteomes" id="UP000006548">
    <property type="component" value="Chromosome 1"/>
</dbReference>
<dbReference type="ExpressionAtlas" id="Q84VZ1">
    <property type="expression patterns" value="baseline and differential"/>
</dbReference>
<dbReference type="GO" id="GO:0009507">
    <property type="term" value="C:chloroplast"/>
    <property type="evidence" value="ECO:0000314"/>
    <property type="project" value="TAIR"/>
</dbReference>
<dbReference type="GO" id="GO:0009570">
    <property type="term" value="C:chloroplast stroma"/>
    <property type="evidence" value="ECO:0007669"/>
    <property type="project" value="UniProtKB-SubCell"/>
</dbReference>
<dbReference type="GO" id="GO:0043726">
    <property type="term" value="F:5-amino-6-(5-phosphoribitylamino)uracil phosphatase activity"/>
    <property type="evidence" value="ECO:0007669"/>
    <property type="project" value="UniProtKB-EC"/>
</dbReference>
<dbReference type="GO" id="GO:0090711">
    <property type="term" value="F:FMN hydrolase activity"/>
    <property type="evidence" value="ECO:0000314"/>
    <property type="project" value="TAIR"/>
</dbReference>
<dbReference type="GO" id="GO:0009231">
    <property type="term" value="P:riboflavin biosynthetic process"/>
    <property type="evidence" value="ECO:0007669"/>
    <property type="project" value="UniProtKB-KW"/>
</dbReference>
<dbReference type="FunFam" id="3.40.50.1000:FF:000416">
    <property type="entry name" value="Bifunctional epoxide hydrolase 2"/>
    <property type="match status" value="1"/>
</dbReference>
<dbReference type="Gene3D" id="3.40.50.1000">
    <property type="entry name" value="HAD superfamily/HAD-like"/>
    <property type="match status" value="1"/>
</dbReference>
<dbReference type="InterPro" id="IPR036412">
    <property type="entry name" value="HAD-like_sf"/>
</dbReference>
<dbReference type="InterPro" id="IPR006439">
    <property type="entry name" value="HAD-SF_hydro_IA"/>
</dbReference>
<dbReference type="InterPro" id="IPR023214">
    <property type="entry name" value="HAD_sf"/>
</dbReference>
<dbReference type="NCBIfam" id="TIGR01509">
    <property type="entry name" value="HAD-SF-IA-v3"/>
    <property type="match status" value="1"/>
</dbReference>
<dbReference type="PANTHER" id="PTHR43611">
    <property type="entry name" value="ALPHA-D-GLUCOSE 1-PHOSPHATE PHOSPHATASE"/>
    <property type="match status" value="1"/>
</dbReference>
<dbReference type="PANTHER" id="PTHR43611:SF3">
    <property type="entry name" value="FLAVIN MONONUCLEOTIDE HYDROLASE 1, CHLOROPLATIC"/>
    <property type="match status" value="1"/>
</dbReference>
<dbReference type="Pfam" id="PF00702">
    <property type="entry name" value="Hydrolase"/>
    <property type="match status" value="1"/>
</dbReference>
<dbReference type="SUPFAM" id="SSF56784">
    <property type="entry name" value="HAD-like"/>
    <property type="match status" value="1"/>
</dbReference>
<feature type="transit peptide" description="Chloroplast" evidence="1">
    <location>
        <begin position="1"/>
        <end position="26"/>
    </location>
</feature>
<feature type="chain" id="PRO_0000439662" description="Flavin mononucleotide hydrolase 1, chloroplatic" evidence="1">
    <location>
        <begin position="27"/>
        <end position="245"/>
    </location>
</feature>
<feature type="sequence conflict" description="In Ref. 5; AAM63745." evidence="7" ref="5">
    <location>
        <position position="38"/>
    </location>
</feature>
<proteinExistence type="evidence at protein level"/>